<dbReference type="EC" id="2.3.1.250" evidence="3"/>
<dbReference type="EMBL" id="HE600917">
    <property type="protein sequence ID" value="CAP25618.1"/>
    <property type="molecule type" value="Genomic_DNA"/>
</dbReference>
<dbReference type="SMR" id="A8WZ09"/>
<dbReference type="FunCoup" id="A8WZ09">
    <property type="interactions" value="793"/>
</dbReference>
<dbReference type="STRING" id="6238.A8WZ09"/>
<dbReference type="KEGG" id="cbr:CBG_05032"/>
<dbReference type="CTD" id="8586855"/>
<dbReference type="WormBase" id="CBG05032">
    <property type="protein sequence ID" value="CBP39278"/>
    <property type="gene ID" value="WBGene00027587"/>
    <property type="gene designation" value="Cbr-mom-1"/>
</dbReference>
<dbReference type="eggNOG" id="KOG4312">
    <property type="taxonomic scope" value="Eukaryota"/>
</dbReference>
<dbReference type="HOGENOM" id="CLU_619997_0_0_1"/>
<dbReference type="InParanoid" id="A8WZ09"/>
<dbReference type="OMA" id="GMDFRIY"/>
<dbReference type="OrthoDB" id="5968863at2759"/>
<dbReference type="Proteomes" id="UP000008549">
    <property type="component" value="Unassembled WGS sequence"/>
</dbReference>
<dbReference type="GO" id="GO:0005783">
    <property type="term" value="C:endoplasmic reticulum"/>
    <property type="evidence" value="ECO:0000250"/>
    <property type="project" value="UniProtKB"/>
</dbReference>
<dbReference type="GO" id="GO:0016020">
    <property type="term" value="C:membrane"/>
    <property type="evidence" value="ECO:0000318"/>
    <property type="project" value="GO_Central"/>
</dbReference>
<dbReference type="GO" id="GO:1990698">
    <property type="term" value="F:palmitoleoyltransferase activity"/>
    <property type="evidence" value="ECO:0000250"/>
    <property type="project" value="UniProtKB"/>
</dbReference>
<dbReference type="GO" id="GO:0017147">
    <property type="term" value="F:Wnt-protein binding"/>
    <property type="evidence" value="ECO:0000318"/>
    <property type="project" value="GO_Central"/>
</dbReference>
<dbReference type="GO" id="GO:0030258">
    <property type="term" value="P:lipid modification"/>
    <property type="evidence" value="ECO:0000318"/>
    <property type="project" value="GO_Central"/>
</dbReference>
<dbReference type="GO" id="GO:0006497">
    <property type="term" value="P:protein lipidation"/>
    <property type="evidence" value="ECO:0000250"/>
    <property type="project" value="UniProtKB"/>
</dbReference>
<dbReference type="GO" id="GO:0045234">
    <property type="term" value="P:protein palmitoleylation"/>
    <property type="evidence" value="ECO:0000250"/>
    <property type="project" value="UniProtKB"/>
</dbReference>
<dbReference type="GO" id="GO:0007367">
    <property type="term" value="P:segment polarity determination"/>
    <property type="evidence" value="ECO:0007669"/>
    <property type="project" value="UniProtKB-KW"/>
</dbReference>
<dbReference type="GO" id="GO:0061355">
    <property type="term" value="P:Wnt protein secretion"/>
    <property type="evidence" value="ECO:0000318"/>
    <property type="project" value="GO_Central"/>
</dbReference>
<dbReference type="GO" id="GO:0016055">
    <property type="term" value="P:Wnt signaling pathway"/>
    <property type="evidence" value="ECO:0000250"/>
    <property type="project" value="UniProtKB"/>
</dbReference>
<dbReference type="InterPro" id="IPR049941">
    <property type="entry name" value="LPLAT_7/PORCN-like"/>
</dbReference>
<dbReference type="InterPro" id="IPR004299">
    <property type="entry name" value="MBOAT_fam"/>
</dbReference>
<dbReference type="PANTHER" id="PTHR13906">
    <property type="entry name" value="PORCUPINE"/>
    <property type="match status" value="1"/>
</dbReference>
<dbReference type="PANTHER" id="PTHR13906:SF12">
    <property type="entry name" value="PROTEIN-SERINE O-PALMITOLEOYLTRANSFERASE PORCUPINE"/>
    <property type="match status" value="1"/>
</dbReference>
<dbReference type="Pfam" id="PF03062">
    <property type="entry name" value="MBOAT"/>
    <property type="match status" value="1"/>
</dbReference>
<keyword id="KW-0012">Acyltransferase</keyword>
<keyword id="KW-0217">Developmental protein</keyword>
<keyword id="KW-0472">Membrane</keyword>
<keyword id="KW-1185">Reference proteome</keyword>
<keyword id="KW-0709">Segmentation polarity protein</keyword>
<keyword id="KW-0808">Transferase</keyword>
<keyword id="KW-0812">Transmembrane</keyword>
<keyword id="KW-1133">Transmembrane helix</keyword>
<keyword id="KW-0879">Wnt signaling pathway</keyword>
<comment type="function">
    <text evidence="1 3">Key regulator of the Wnt signaling pathway that mediates lipid modification of Wnt proteins. Acts as a protein-serine O-palmitoleoyltransferase that catalyzes the attachment of palmitoleate, a 16-carbon monounsaturated fatty acid (C16:1(9Z)), to Wnt proteins. Serine palmitoleoylation of WNT proteins is required for efficient binding to frizzled receptors. Has a role in cell specification, specifically in blastomere signaling. Involved in cytosketetal polarity. Required for the orientation of mitotic spindle axis.</text>
</comment>
<comment type="catalytic activity">
    <reaction evidence="3">
        <text>[Wnt protein]-L-serine + (9Z)-hexadecenoyl-CoA = [Wnt protein]-O-(9Z)-hexadecenoyl-L-serine + CoA</text>
        <dbReference type="Rhea" id="RHEA:45336"/>
        <dbReference type="Rhea" id="RHEA-COMP:11170"/>
        <dbReference type="Rhea" id="RHEA-COMP:11171"/>
        <dbReference type="ChEBI" id="CHEBI:29999"/>
        <dbReference type="ChEBI" id="CHEBI:57287"/>
        <dbReference type="ChEBI" id="CHEBI:61540"/>
        <dbReference type="ChEBI" id="CHEBI:85189"/>
        <dbReference type="EC" id="2.3.1.250"/>
    </reaction>
</comment>
<comment type="subcellular location">
    <subcellularLocation>
        <location evidence="4">Membrane</location>
        <topology evidence="4">Multi-pass membrane protein</topology>
    </subcellularLocation>
</comment>
<comment type="similarity">
    <text evidence="5">Belongs to the membrane-bound acyltransferase family. Porcupine subfamily.</text>
</comment>
<name>PORCN_CAEBR</name>
<sequence>MDHHLDPNLDNLFEMYGESVEECATQVANGTLLTLLQMLVLVWMFFLVWRLSLPPRIQTFLHIAMTTLTVAWFSPKKLESVMIFHTFSLISLFCAVQKLNGYRILGLNIMLLIALQNICSRANADDYFLTLRGVLMMHIMRLSTASFAIVDSNVRSISFDQLTLYLEYIYFPPFIIFGPYVTFDQFVKMREKKWTRFEEQLGVFVQGSVLIFIGITLAIISSCYVDFFEPGSQFVEDALTAMSFRCSHYFICLSTQAFAMFLGSKIVVANPVNIEFSRSTLQTVSEWNRPFHTYLHENIFKRRFFQSTALNVLLTFAVSALLHARDYQMWLTLLALGFIAYSETVFRKRIADRFSMCVAAKPCSVRANRRICKHKHASFSKRVLIINLFFMILSMYHLVFTGMTFTDDYAAIGYPFSHTWTIWGTHYYSSFIVSFAFLALSKII</sequence>
<feature type="chain" id="PRO_0000397907" description="Protein-serine O-palmitoleoyltransferase porcupine">
    <location>
        <begin position="1"/>
        <end position="444"/>
    </location>
</feature>
<feature type="transmembrane region" description="Helical" evidence="4">
    <location>
        <begin position="29"/>
        <end position="49"/>
    </location>
</feature>
<feature type="transmembrane region" description="Helical" evidence="4">
    <location>
        <begin position="81"/>
        <end position="101"/>
    </location>
</feature>
<feature type="transmembrane region" description="Helical" evidence="4">
    <location>
        <begin position="128"/>
        <end position="150"/>
    </location>
</feature>
<feature type="transmembrane region" description="Helical" evidence="4">
    <location>
        <begin position="163"/>
        <end position="183"/>
    </location>
</feature>
<feature type="transmembrane region" description="Helical" evidence="4">
    <location>
        <begin position="201"/>
        <end position="221"/>
    </location>
</feature>
<feature type="transmembrane region" description="Helical" evidence="4">
    <location>
        <begin position="249"/>
        <end position="269"/>
    </location>
</feature>
<feature type="transmembrane region" description="Helical" evidence="4">
    <location>
        <begin position="304"/>
        <end position="324"/>
    </location>
</feature>
<feature type="transmembrane region" description="Helical" evidence="4">
    <location>
        <begin position="326"/>
        <end position="346"/>
    </location>
</feature>
<feature type="transmembrane region" description="Helical" evidence="4">
    <location>
        <begin position="383"/>
        <end position="403"/>
    </location>
</feature>
<feature type="transmembrane region" description="Helical" evidence="4">
    <location>
        <begin position="420"/>
        <end position="440"/>
    </location>
</feature>
<feature type="active site" evidence="2">
    <location>
        <position position="323"/>
    </location>
</feature>
<reference key="1">
    <citation type="journal article" date="2003" name="PLoS Biol.">
        <title>The genome sequence of Caenorhabditis briggsae: a platform for comparative genomics.</title>
        <authorList>
            <person name="Stein L.D."/>
            <person name="Bao Z."/>
            <person name="Blasiar D."/>
            <person name="Blumenthal T."/>
            <person name="Brent M.R."/>
            <person name="Chen N."/>
            <person name="Chinwalla A."/>
            <person name="Clarke L."/>
            <person name="Clee C."/>
            <person name="Coghlan A."/>
            <person name="Coulson A."/>
            <person name="D'Eustachio P."/>
            <person name="Fitch D.H.A."/>
            <person name="Fulton L.A."/>
            <person name="Fulton R.E."/>
            <person name="Griffiths-Jones S."/>
            <person name="Harris T.W."/>
            <person name="Hillier L.W."/>
            <person name="Kamath R."/>
            <person name="Kuwabara P.E."/>
            <person name="Mardis E.R."/>
            <person name="Marra M.A."/>
            <person name="Miner T.L."/>
            <person name="Minx P."/>
            <person name="Mullikin J.C."/>
            <person name="Plumb R.W."/>
            <person name="Rogers J."/>
            <person name="Schein J.E."/>
            <person name="Sohrmann M."/>
            <person name="Spieth J."/>
            <person name="Stajich J.E."/>
            <person name="Wei C."/>
            <person name="Willey D."/>
            <person name="Wilson R.K."/>
            <person name="Durbin R.M."/>
            <person name="Waterston R.H."/>
        </authorList>
    </citation>
    <scope>NUCLEOTIDE SEQUENCE [LARGE SCALE GENOMIC DNA]</scope>
    <source>
        <strain>AF16</strain>
    </source>
</reference>
<organism>
    <name type="scientific">Caenorhabditis briggsae</name>
    <dbReference type="NCBI Taxonomy" id="6238"/>
    <lineage>
        <taxon>Eukaryota</taxon>
        <taxon>Metazoa</taxon>
        <taxon>Ecdysozoa</taxon>
        <taxon>Nematoda</taxon>
        <taxon>Chromadorea</taxon>
        <taxon>Rhabditida</taxon>
        <taxon>Rhabditina</taxon>
        <taxon>Rhabditomorpha</taxon>
        <taxon>Rhabditoidea</taxon>
        <taxon>Rhabditidae</taxon>
        <taxon>Peloderinae</taxon>
        <taxon>Caenorhabditis</taxon>
    </lineage>
</organism>
<accession>A8WZ09</accession>
<protein>
    <recommendedName>
        <fullName evidence="3">Protein-serine O-palmitoleoyltransferase porcupine</fullName>
        <ecNumber evidence="3">2.3.1.250</ecNumber>
    </recommendedName>
    <alternativeName>
        <fullName evidence="1">More of ms protein 1</fullName>
    </alternativeName>
</protein>
<evidence type="ECO:0000250" key="1">
    <source>
        <dbReference type="UniProtKB" id="Q22329"/>
    </source>
</evidence>
<evidence type="ECO:0000250" key="2">
    <source>
        <dbReference type="UniProtKB" id="Q9H237"/>
    </source>
</evidence>
<evidence type="ECO:0000250" key="3">
    <source>
        <dbReference type="UniProtKB" id="Q9JJJ7"/>
    </source>
</evidence>
<evidence type="ECO:0000255" key="4"/>
<evidence type="ECO:0000305" key="5"/>
<gene>
    <name evidence="1" type="primary">mom-1</name>
    <name type="ORF">CBG05032</name>
</gene>
<proteinExistence type="inferred from homology"/>